<proteinExistence type="evidence at protein level"/>
<reference evidence="7" key="1">
    <citation type="journal article" date="2012" name="Mol. Ecol.">
        <title>Whole transcriptome analysis of the coral Acropora millepora reveals complex responses to CO(2)-driven acidification during the initiation of calcification.</title>
        <authorList>
            <person name="Moya A."/>
            <person name="Huisman L."/>
            <person name="Ball E.E."/>
            <person name="Hayward D.C."/>
            <person name="Grasso L.C."/>
            <person name="Chua C.M."/>
            <person name="Woo H.N."/>
            <person name="Gattuso J.P."/>
            <person name="Foret S."/>
            <person name="Miller D.J."/>
        </authorList>
    </citation>
    <scope>NUCLEOTIDE SEQUENCE [MRNA]</scope>
</reference>
<reference evidence="7" key="2">
    <citation type="journal article" date="2013" name="Mol. Biol. Evol.">
        <title>The skeletal proteome of the coral Acropora millepora: the evolution of calcification by co-option and domain shuffling.</title>
        <authorList>
            <person name="Ramos-Silva P."/>
            <person name="Kaandorp J."/>
            <person name="Huisman L."/>
            <person name="Marie B."/>
            <person name="Zanella-Cleon I."/>
            <person name="Guichard N."/>
            <person name="Miller D.J."/>
            <person name="Marin F."/>
        </authorList>
    </citation>
    <scope>PROTEIN SEQUENCE OF 38-59; 71-112 AND 122-141</scope>
    <scope>TISSUE SPECIFICITY</scope>
    <scope>IDENTIFICATION BY MASS SPECTROMETRY</scope>
</reference>
<feature type="chain" id="PRO_0000429492" description="Putative carbonic anhydrase">
    <location>
        <begin position="1" status="less than"/>
        <end position="148"/>
    </location>
</feature>
<feature type="domain" description="Alpha-carbonic anhydrase" evidence="4">
    <location>
        <begin position="1"/>
        <end position="146"/>
    </location>
</feature>
<feature type="non-terminal residue" evidence="7">
    <location>
        <position position="1"/>
    </location>
</feature>
<protein>
    <recommendedName>
        <fullName evidence="6">Putative carbonic anhydrase</fullName>
        <ecNumber evidence="2">4.2.1.1</ecNumber>
    </recommendedName>
    <alternativeName>
        <fullName evidence="2">Carbonate dehydratase</fullName>
    </alternativeName>
</protein>
<organism>
    <name type="scientific">Acropora millepora</name>
    <name type="common">Staghorn coral</name>
    <name type="synonym">Heteropora millepora</name>
    <dbReference type="NCBI Taxonomy" id="45264"/>
    <lineage>
        <taxon>Eukaryota</taxon>
        <taxon>Metazoa</taxon>
        <taxon>Cnidaria</taxon>
        <taxon>Anthozoa</taxon>
        <taxon>Hexacorallia</taxon>
        <taxon>Scleractinia</taxon>
        <taxon>Astrocoeniina</taxon>
        <taxon>Acroporidae</taxon>
        <taxon>Acropora</taxon>
    </lineage>
</organism>
<name>CAH_ACRMI</name>
<comment type="function">
    <text evidence="2">Reversible hydration of carbon dioxide.</text>
</comment>
<comment type="catalytic activity">
    <reaction evidence="2">
        <text>hydrogencarbonate + H(+) = CO2 + H2O</text>
        <dbReference type="Rhea" id="RHEA:10748"/>
        <dbReference type="ChEBI" id="CHEBI:15377"/>
        <dbReference type="ChEBI" id="CHEBI:15378"/>
        <dbReference type="ChEBI" id="CHEBI:16526"/>
        <dbReference type="ChEBI" id="CHEBI:17544"/>
        <dbReference type="EC" id="4.2.1.1"/>
    </reaction>
</comment>
<comment type="cofactor">
    <cofactor evidence="1">
        <name>Zn(2+)</name>
        <dbReference type="ChEBI" id="CHEBI:29105"/>
    </cofactor>
</comment>
<comment type="subcellular location">
    <subcellularLocation>
        <location evidence="8">Secreted</location>
    </subcellularLocation>
</comment>
<comment type="tissue specificity">
    <text evidence="5">Component of the acid-insoluble organic matrix of the aragonitic skeleton (at protein level).</text>
</comment>
<comment type="similarity">
    <text evidence="3">Belongs to the alpha-carbonic anhydrase family.</text>
</comment>
<evidence type="ECO:0000250" key="1">
    <source>
        <dbReference type="UniProtKB" id="P00915"/>
    </source>
</evidence>
<evidence type="ECO:0000250" key="2">
    <source>
        <dbReference type="UniProtKB" id="P83299"/>
    </source>
</evidence>
<evidence type="ECO:0000255" key="3"/>
<evidence type="ECO:0000255" key="4">
    <source>
        <dbReference type="PROSITE-ProRule" id="PRU01134"/>
    </source>
</evidence>
<evidence type="ECO:0000269" key="5">
    <source>
    </source>
</evidence>
<evidence type="ECO:0000303" key="6">
    <source>
    </source>
</evidence>
<evidence type="ECO:0000305" key="7"/>
<evidence type="ECO:0000305" key="8">
    <source>
    </source>
</evidence>
<sequence length="148" mass="17040">CLKRLQPGEMSLQLLLSGCRLRLEQETGVLGRFADLTRKIIQPDSDETVRFSDGIFIRGLIPQRCNTRFSRLAILNCYYTYKGSLTTPICSENVTWLIVKPRLPATNNMMRKFRRLETPAGKNPPLMCDNFRPVQPLNGRTVFEVHRI</sequence>
<keyword id="KW-0903">Direct protein sequencing</keyword>
<keyword id="KW-0456">Lyase</keyword>
<keyword id="KW-0479">Metal-binding</keyword>
<keyword id="KW-0964">Secreted</keyword>
<keyword id="KW-0862">Zinc</keyword>
<dbReference type="EC" id="4.2.1.1" evidence="2"/>
<dbReference type="EMBL" id="JR998014">
    <property type="status" value="NOT_ANNOTATED_CDS"/>
    <property type="molecule type" value="mRNA"/>
</dbReference>
<dbReference type="SMR" id="B8V7P3"/>
<dbReference type="OrthoDB" id="5962929at2759"/>
<dbReference type="GO" id="GO:0005576">
    <property type="term" value="C:extracellular region"/>
    <property type="evidence" value="ECO:0007669"/>
    <property type="project" value="UniProtKB-SubCell"/>
</dbReference>
<dbReference type="GO" id="GO:0004089">
    <property type="term" value="F:carbonate dehydratase activity"/>
    <property type="evidence" value="ECO:0007669"/>
    <property type="project" value="UniProtKB-EC"/>
</dbReference>
<dbReference type="GO" id="GO:0008270">
    <property type="term" value="F:zinc ion binding"/>
    <property type="evidence" value="ECO:0007669"/>
    <property type="project" value="InterPro"/>
</dbReference>
<dbReference type="Gene3D" id="3.10.200.10">
    <property type="entry name" value="Alpha carbonic anhydrase"/>
    <property type="match status" value="1"/>
</dbReference>
<dbReference type="InterPro" id="IPR001148">
    <property type="entry name" value="CA_dom"/>
</dbReference>
<dbReference type="InterPro" id="IPR036398">
    <property type="entry name" value="CA_dom_sf"/>
</dbReference>
<dbReference type="InterPro" id="IPR023561">
    <property type="entry name" value="Carbonic_anhydrase_a-class"/>
</dbReference>
<dbReference type="PANTHER" id="PTHR18952">
    <property type="entry name" value="CARBONIC ANHYDRASE"/>
    <property type="match status" value="1"/>
</dbReference>
<dbReference type="PANTHER" id="PTHR18952:SF265">
    <property type="entry name" value="CARBONIC ANHYDRASE"/>
    <property type="match status" value="1"/>
</dbReference>
<dbReference type="Pfam" id="PF00194">
    <property type="entry name" value="Carb_anhydrase"/>
    <property type="match status" value="1"/>
</dbReference>
<dbReference type="SMART" id="SM01057">
    <property type="entry name" value="Carb_anhydrase"/>
    <property type="match status" value="1"/>
</dbReference>
<dbReference type="SUPFAM" id="SSF51069">
    <property type="entry name" value="Carbonic anhydrase"/>
    <property type="match status" value="1"/>
</dbReference>
<dbReference type="PROSITE" id="PS51144">
    <property type="entry name" value="ALPHA_CA_2"/>
    <property type="match status" value="1"/>
</dbReference>
<accession>B8V7P3</accession>